<sequence length="324" mass="35676">MSLYMLVSTFAVAFIITVIGVPLFIPFLVKLKFGQSIRDEGPKMHEKKSGTPTMGAVVFITAMLISFLIFSFISGEVSAATWLLFIALALFGALGFLDDYIKVVQKRNLGLTSKQKFLGQVAISILFYLVYHLNGFAETLNIPFTNIEVDLGWFFVIFILFWLVGFSNAVNLTDGLDGLVSGLSVIAFSAFGVIAFYQEQMDVAIFCFAIVGGMLGFLLFNKNPAKIFMGDTGSLALGGSIAAISILVHQEWLLLLIGIIFVIETASVILQVFYFKATGGKRIFRMTPIHHHFELGGWSEWRVVLTFWGIGLIGAIISVCVVIF</sequence>
<proteinExistence type="inferred from homology"/>
<protein>
    <recommendedName>
        <fullName evidence="1">Phospho-N-acetylmuramoyl-pentapeptide-transferase</fullName>
        <ecNumber evidence="1">2.7.8.13</ecNumber>
    </recommendedName>
    <alternativeName>
        <fullName evidence="1">UDP-MurNAc-pentapeptide phosphotransferase</fullName>
    </alternativeName>
</protein>
<reference key="1">
    <citation type="journal article" date="2004" name="Nucleic Acids Res.">
        <title>Whole genome comparisons of serotype 4b and 1/2a strains of the food-borne pathogen Listeria monocytogenes reveal new insights into the core genome components of this species.</title>
        <authorList>
            <person name="Nelson K.E."/>
            <person name="Fouts D.E."/>
            <person name="Mongodin E.F."/>
            <person name="Ravel J."/>
            <person name="DeBoy R.T."/>
            <person name="Kolonay J.F."/>
            <person name="Rasko D.A."/>
            <person name="Angiuoli S.V."/>
            <person name="Gill S.R."/>
            <person name="Paulsen I.T."/>
            <person name="Peterson J.D."/>
            <person name="White O."/>
            <person name="Nelson W.C."/>
            <person name="Nierman W.C."/>
            <person name="Beanan M.J."/>
            <person name="Brinkac L.M."/>
            <person name="Daugherty S.C."/>
            <person name="Dodson R.J."/>
            <person name="Durkin A.S."/>
            <person name="Madupu R."/>
            <person name="Haft D.H."/>
            <person name="Selengut J."/>
            <person name="Van Aken S.E."/>
            <person name="Khouri H.M."/>
            <person name="Fedorova N."/>
            <person name="Forberger H.A."/>
            <person name="Tran B."/>
            <person name="Kathariou S."/>
            <person name="Wonderling L.D."/>
            <person name="Uhlich G.A."/>
            <person name="Bayles D.O."/>
            <person name="Luchansky J.B."/>
            <person name="Fraser C.M."/>
        </authorList>
    </citation>
    <scope>NUCLEOTIDE SEQUENCE [LARGE SCALE GENOMIC DNA]</scope>
    <source>
        <strain>F2365</strain>
    </source>
</reference>
<name>MRAY_LISMF</name>
<accession>Q71XX6</accession>
<organism>
    <name type="scientific">Listeria monocytogenes serotype 4b (strain F2365)</name>
    <dbReference type="NCBI Taxonomy" id="265669"/>
    <lineage>
        <taxon>Bacteria</taxon>
        <taxon>Bacillati</taxon>
        <taxon>Bacillota</taxon>
        <taxon>Bacilli</taxon>
        <taxon>Bacillales</taxon>
        <taxon>Listeriaceae</taxon>
        <taxon>Listeria</taxon>
    </lineage>
</organism>
<dbReference type="EC" id="2.7.8.13" evidence="1"/>
<dbReference type="EMBL" id="AE017262">
    <property type="protein sequence ID" value="AAT04839.1"/>
    <property type="status" value="ALT_INIT"/>
    <property type="molecule type" value="Genomic_DNA"/>
</dbReference>
<dbReference type="RefSeq" id="WP_003728332.1">
    <property type="nucleotide sequence ID" value="NC_002973.6"/>
</dbReference>
<dbReference type="SMR" id="Q71XX6"/>
<dbReference type="KEGG" id="lmf:LMOf2365_2069"/>
<dbReference type="HOGENOM" id="CLU_023982_0_1_9"/>
<dbReference type="UniPathway" id="UPA00219"/>
<dbReference type="GO" id="GO:0005886">
    <property type="term" value="C:plasma membrane"/>
    <property type="evidence" value="ECO:0007669"/>
    <property type="project" value="UniProtKB-SubCell"/>
</dbReference>
<dbReference type="GO" id="GO:0046872">
    <property type="term" value="F:metal ion binding"/>
    <property type="evidence" value="ECO:0007669"/>
    <property type="project" value="UniProtKB-KW"/>
</dbReference>
<dbReference type="GO" id="GO:0008963">
    <property type="term" value="F:phospho-N-acetylmuramoyl-pentapeptide-transferase activity"/>
    <property type="evidence" value="ECO:0007669"/>
    <property type="project" value="UniProtKB-UniRule"/>
</dbReference>
<dbReference type="GO" id="GO:0051992">
    <property type="term" value="F:UDP-N-acetylmuramoyl-L-alanyl-D-glutamyl-meso-2,6-diaminopimelyl-D-alanyl-D-alanine:undecaprenyl-phosphate transferase activity"/>
    <property type="evidence" value="ECO:0007669"/>
    <property type="project" value="RHEA"/>
</dbReference>
<dbReference type="GO" id="GO:0051301">
    <property type="term" value="P:cell division"/>
    <property type="evidence" value="ECO:0007669"/>
    <property type="project" value="UniProtKB-KW"/>
</dbReference>
<dbReference type="GO" id="GO:0071555">
    <property type="term" value="P:cell wall organization"/>
    <property type="evidence" value="ECO:0007669"/>
    <property type="project" value="UniProtKB-KW"/>
</dbReference>
<dbReference type="GO" id="GO:0009252">
    <property type="term" value="P:peptidoglycan biosynthetic process"/>
    <property type="evidence" value="ECO:0007669"/>
    <property type="project" value="UniProtKB-UniRule"/>
</dbReference>
<dbReference type="GO" id="GO:0008360">
    <property type="term" value="P:regulation of cell shape"/>
    <property type="evidence" value="ECO:0007669"/>
    <property type="project" value="UniProtKB-KW"/>
</dbReference>
<dbReference type="CDD" id="cd06852">
    <property type="entry name" value="GT_MraY"/>
    <property type="match status" value="1"/>
</dbReference>
<dbReference type="HAMAP" id="MF_00038">
    <property type="entry name" value="MraY"/>
    <property type="match status" value="1"/>
</dbReference>
<dbReference type="InterPro" id="IPR000715">
    <property type="entry name" value="Glycosyl_transferase_4"/>
</dbReference>
<dbReference type="InterPro" id="IPR003524">
    <property type="entry name" value="PNAcMuramoyl-5peptid_Trfase"/>
</dbReference>
<dbReference type="InterPro" id="IPR018480">
    <property type="entry name" value="PNAcMuramoyl-5peptid_Trfase_CS"/>
</dbReference>
<dbReference type="NCBIfam" id="TIGR00445">
    <property type="entry name" value="mraY"/>
    <property type="match status" value="1"/>
</dbReference>
<dbReference type="PANTHER" id="PTHR22926">
    <property type="entry name" value="PHOSPHO-N-ACETYLMURAMOYL-PENTAPEPTIDE-TRANSFERASE"/>
    <property type="match status" value="1"/>
</dbReference>
<dbReference type="PANTHER" id="PTHR22926:SF5">
    <property type="entry name" value="PHOSPHO-N-ACETYLMURAMOYL-PENTAPEPTIDE-TRANSFERASE HOMOLOG"/>
    <property type="match status" value="1"/>
</dbReference>
<dbReference type="Pfam" id="PF00953">
    <property type="entry name" value="Glycos_transf_4"/>
    <property type="match status" value="1"/>
</dbReference>
<dbReference type="PROSITE" id="PS01348">
    <property type="entry name" value="MRAY_2"/>
    <property type="match status" value="1"/>
</dbReference>
<comment type="function">
    <text evidence="1">Catalyzes the initial step of the lipid cycle reactions in the biosynthesis of the cell wall peptidoglycan: transfers peptidoglycan precursor phospho-MurNAc-pentapeptide from UDP-MurNAc-pentapeptide onto the lipid carrier undecaprenyl phosphate, yielding undecaprenyl-pyrophosphoryl-MurNAc-pentapeptide, known as lipid I.</text>
</comment>
<comment type="catalytic activity">
    <reaction evidence="1">
        <text>UDP-N-acetyl-alpha-D-muramoyl-L-alanyl-gamma-D-glutamyl-meso-2,6-diaminopimeloyl-D-alanyl-D-alanine + di-trans,octa-cis-undecaprenyl phosphate = di-trans,octa-cis-undecaprenyl diphospho-N-acetyl-alpha-D-muramoyl-L-alanyl-D-glutamyl-meso-2,6-diaminopimeloyl-D-alanyl-D-alanine + UMP</text>
        <dbReference type="Rhea" id="RHEA:28386"/>
        <dbReference type="ChEBI" id="CHEBI:57865"/>
        <dbReference type="ChEBI" id="CHEBI:60392"/>
        <dbReference type="ChEBI" id="CHEBI:61386"/>
        <dbReference type="ChEBI" id="CHEBI:61387"/>
        <dbReference type="EC" id="2.7.8.13"/>
    </reaction>
</comment>
<comment type="cofactor">
    <cofactor evidence="1">
        <name>Mg(2+)</name>
        <dbReference type="ChEBI" id="CHEBI:18420"/>
    </cofactor>
</comment>
<comment type="pathway">
    <text evidence="1">Cell wall biogenesis; peptidoglycan biosynthesis.</text>
</comment>
<comment type="subcellular location">
    <subcellularLocation>
        <location evidence="1">Cell membrane</location>
        <topology evidence="1">Multi-pass membrane protein</topology>
    </subcellularLocation>
</comment>
<comment type="similarity">
    <text evidence="1">Belongs to the glycosyltransferase 4 family. MraY subfamily.</text>
</comment>
<comment type="sequence caution" evidence="2">
    <conflict type="erroneous initiation">
        <sequence resource="EMBL-CDS" id="AAT04839"/>
    </conflict>
</comment>
<evidence type="ECO:0000255" key="1">
    <source>
        <dbReference type="HAMAP-Rule" id="MF_00038"/>
    </source>
</evidence>
<evidence type="ECO:0000305" key="2"/>
<feature type="chain" id="PRO_0000108849" description="Phospho-N-acetylmuramoyl-pentapeptide-transferase">
    <location>
        <begin position="1"/>
        <end position="324"/>
    </location>
</feature>
<feature type="transmembrane region" description="Helical" evidence="1">
    <location>
        <begin position="9"/>
        <end position="29"/>
    </location>
</feature>
<feature type="transmembrane region" description="Helical" evidence="1">
    <location>
        <begin position="53"/>
        <end position="73"/>
    </location>
</feature>
<feature type="transmembrane region" description="Helical" evidence="1">
    <location>
        <begin position="77"/>
        <end position="97"/>
    </location>
</feature>
<feature type="transmembrane region" description="Helical" evidence="1">
    <location>
        <begin position="117"/>
        <end position="137"/>
    </location>
</feature>
<feature type="transmembrane region" description="Helical" evidence="1">
    <location>
        <begin position="147"/>
        <end position="167"/>
    </location>
</feature>
<feature type="transmembrane region" description="Helical" evidence="1">
    <location>
        <begin position="176"/>
        <end position="196"/>
    </location>
</feature>
<feature type="transmembrane region" description="Helical" evidence="1">
    <location>
        <begin position="201"/>
        <end position="221"/>
    </location>
</feature>
<feature type="transmembrane region" description="Helical" evidence="1">
    <location>
        <begin position="227"/>
        <end position="247"/>
    </location>
</feature>
<feature type="transmembrane region" description="Helical" evidence="1">
    <location>
        <begin position="253"/>
        <end position="273"/>
    </location>
</feature>
<feature type="transmembrane region" description="Helical" evidence="1">
    <location>
        <begin position="304"/>
        <end position="324"/>
    </location>
</feature>
<gene>
    <name evidence="1" type="primary">mraY</name>
    <name type="ordered locus">LMOf2365_2069</name>
</gene>
<keyword id="KW-0131">Cell cycle</keyword>
<keyword id="KW-0132">Cell division</keyword>
<keyword id="KW-1003">Cell membrane</keyword>
<keyword id="KW-0133">Cell shape</keyword>
<keyword id="KW-0961">Cell wall biogenesis/degradation</keyword>
<keyword id="KW-0460">Magnesium</keyword>
<keyword id="KW-0472">Membrane</keyword>
<keyword id="KW-0479">Metal-binding</keyword>
<keyword id="KW-0573">Peptidoglycan synthesis</keyword>
<keyword id="KW-0808">Transferase</keyword>
<keyword id="KW-0812">Transmembrane</keyword>
<keyword id="KW-1133">Transmembrane helix</keyword>